<organism>
    <name type="scientific">Shewanella oneidensis (strain ATCC 700550 / JCM 31522 / CIP 106686 / LMG 19005 / NCIMB 14063 / MR-1)</name>
    <dbReference type="NCBI Taxonomy" id="211586"/>
    <lineage>
        <taxon>Bacteria</taxon>
        <taxon>Pseudomonadati</taxon>
        <taxon>Pseudomonadota</taxon>
        <taxon>Gammaproteobacteria</taxon>
        <taxon>Alteromonadales</taxon>
        <taxon>Shewanellaceae</taxon>
        <taxon>Shewanella</taxon>
    </lineage>
</organism>
<gene>
    <name evidence="1" type="primary">dut</name>
    <name type="ordered locus">SO_4250</name>
</gene>
<proteinExistence type="inferred from homology"/>
<evidence type="ECO:0000255" key="1">
    <source>
        <dbReference type="HAMAP-Rule" id="MF_00116"/>
    </source>
</evidence>
<accession>Q8E9M0</accession>
<dbReference type="EC" id="3.6.1.23" evidence="1"/>
<dbReference type="EMBL" id="AE014299">
    <property type="protein sequence ID" value="AAN57221.1"/>
    <property type="molecule type" value="Genomic_DNA"/>
</dbReference>
<dbReference type="RefSeq" id="NP_719777.1">
    <property type="nucleotide sequence ID" value="NC_004347.2"/>
</dbReference>
<dbReference type="RefSeq" id="WP_011073925.1">
    <property type="nucleotide sequence ID" value="NC_004347.2"/>
</dbReference>
<dbReference type="SMR" id="Q8E9M0"/>
<dbReference type="STRING" id="211586.SO_4250"/>
<dbReference type="PaxDb" id="211586-SO_4250"/>
<dbReference type="KEGG" id="son:SO_4250"/>
<dbReference type="PATRIC" id="fig|211586.12.peg.4109"/>
<dbReference type="eggNOG" id="COG0756">
    <property type="taxonomic scope" value="Bacteria"/>
</dbReference>
<dbReference type="HOGENOM" id="CLU_068508_1_1_6"/>
<dbReference type="OrthoDB" id="9809956at2"/>
<dbReference type="PhylomeDB" id="Q8E9M0"/>
<dbReference type="BioCyc" id="SONE211586:G1GMP-3926-MONOMER"/>
<dbReference type="UniPathway" id="UPA00610">
    <property type="reaction ID" value="UER00666"/>
</dbReference>
<dbReference type="Proteomes" id="UP000008186">
    <property type="component" value="Chromosome"/>
</dbReference>
<dbReference type="GO" id="GO:0004170">
    <property type="term" value="F:dUTP diphosphatase activity"/>
    <property type="evidence" value="ECO:0000318"/>
    <property type="project" value="GO_Central"/>
</dbReference>
<dbReference type="GO" id="GO:0000287">
    <property type="term" value="F:magnesium ion binding"/>
    <property type="evidence" value="ECO:0000318"/>
    <property type="project" value="GO_Central"/>
</dbReference>
<dbReference type="GO" id="GO:0006226">
    <property type="term" value="P:dUMP biosynthetic process"/>
    <property type="evidence" value="ECO:0000318"/>
    <property type="project" value="GO_Central"/>
</dbReference>
<dbReference type="GO" id="GO:0046081">
    <property type="term" value="P:dUTP catabolic process"/>
    <property type="evidence" value="ECO:0000318"/>
    <property type="project" value="GO_Central"/>
</dbReference>
<dbReference type="CDD" id="cd07557">
    <property type="entry name" value="trimeric_dUTPase"/>
    <property type="match status" value="1"/>
</dbReference>
<dbReference type="FunFam" id="2.70.40.10:FF:000002">
    <property type="entry name" value="dUTP diphosphatase"/>
    <property type="match status" value="1"/>
</dbReference>
<dbReference type="Gene3D" id="2.70.40.10">
    <property type="match status" value="1"/>
</dbReference>
<dbReference type="HAMAP" id="MF_00116">
    <property type="entry name" value="dUTPase_bact"/>
    <property type="match status" value="1"/>
</dbReference>
<dbReference type="InterPro" id="IPR008181">
    <property type="entry name" value="dUTPase"/>
</dbReference>
<dbReference type="InterPro" id="IPR029054">
    <property type="entry name" value="dUTPase-like"/>
</dbReference>
<dbReference type="InterPro" id="IPR036157">
    <property type="entry name" value="dUTPase-like_sf"/>
</dbReference>
<dbReference type="InterPro" id="IPR033704">
    <property type="entry name" value="dUTPase_trimeric"/>
</dbReference>
<dbReference type="NCBIfam" id="TIGR00576">
    <property type="entry name" value="dut"/>
    <property type="match status" value="1"/>
</dbReference>
<dbReference type="NCBIfam" id="NF001862">
    <property type="entry name" value="PRK00601.1"/>
    <property type="match status" value="1"/>
</dbReference>
<dbReference type="PANTHER" id="PTHR11241">
    <property type="entry name" value="DEOXYURIDINE 5'-TRIPHOSPHATE NUCLEOTIDOHYDROLASE"/>
    <property type="match status" value="1"/>
</dbReference>
<dbReference type="PANTHER" id="PTHR11241:SF0">
    <property type="entry name" value="DEOXYURIDINE 5'-TRIPHOSPHATE NUCLEOTIDOHYDROLASE"/>
    <property type="match status" value="1"/>
</dbReference>
<dbReference type="Pfam" id="PF00692">
    <property type="entry name" value="dUTPase"/>
    <property type="match status" value="1"/>
</dbReference>
<dbReference type="SUPFAM" id="SSF51283">
    <property type="entry name" value="dUTPase-like"/>
    <property type="match status" value="1"/>
</dbReference>
<protein>
    <recommendedName>
        <fullName evidence="1">Deoxyuridine 5'-triphosphate nucleotidohydrolase</fullName>
        <shortName evidence="1">dUTPase</shortName>
        <ecNumber evidence="1">3.6.1.23</ecNumber>
    </recommendedName>
    <alternativeName>
        <fullName evidence="1">dUTP pyrophosphatase</fullName>
    </alternativeName>
</protein>
<keyword id="KW-0378">Hydrolase</keyword>
<keyword id="KW-0460">Magnesium</keyword>
<keyword id="KW-0479">Metal-binding</keyword>
<keyword id="KW-0546">Nucleotide metabolism</keyword>
<keyword id="KW-1185">Reference proteome</keyword>
<sequence>MKTPIELKILDSRIGSEFPLPAYATPGSAGMDLRAMIDTTMTIAPGETQLVPTGIAIHVADPGLAALILPRSGLGHKHGIVLGNLVGLVDSDYQGPLMVSCWNRSDTPFTLEIGDRLAQLVFVPVVQAQFKLVDEFDSSDRGEGGFGHSGTK</sequence>
<reference key="1">
    <citation type="journal article" date="2002" name="Nat. Biotechnol.">
        <title>Genome sequence of the dissimilatory metal ion-reducing bacterium Shewanella oneidensis.</title>
        <authorList>
            <person name="Heidelberg J.F."/>
            <person name="Paulsen I.T."/>
            <person name="Nelson K.E."/>
            <person name="Gaidos E.J."/>
            <person name="Nelson W.C."/>
            <person name="Read T.D."/>
            <person name="Eisen J.A."/>
            <person name="Seshadri R."/>
            <person name="Ward N.L."/>
            <person name="Methe B.A."/>
            <person name="Clayton R.A."/>
            <person name="Meyer T."/>
            <person name="Tsapin A."/>
            <person name="Scott J."/>
            <person name="Beanan M.J."/>
            <person name="Brinkac L.M."/>
            <person name="Daugherty S.C."/>
            <person name="DeBoy R.T."/>
            <person name="Dodson R.J."/>
            <person name="Durkin A.S."/>
            <person name="Haft D.H."/>
            <person name="Kolonay J.F."/>
            <person name="Madupu R."/>
            <person name="Peterson J.D."/>
            <person name="Umayam L.A."/>
            <person name="White O."/>
            <person name="Wolf A.M."/>
            <person name="Vamathevan J.J."/>
            <person name="Weidman J.F."/>
            <person name="Impraim M."/>
            <person name="Lee K."/>
            <person name="Berry K.J."/>
            <person name="Lee C."/>
            <person name="Mueller J."/>
            <person name="Khouri H.M."/>
            <person name="Gill J."/>
            <person name="Utterback T.R."/>
            <person name="McDonald L.A."/>
            <person name="Feldblyum T.V."/>
            <person name="Smith H.O."/>
            <person name="Venter J.C."/>
            <person name="Nealson K.H."/>
            <person name="Fraser C.M."/>
        </authorList>
    </citation>
    <scope>NUCLEOTIDE SEQUENCE [LARGE SCALE GENOMIC DNA]</scope>
    <source>
        <strain>ATCC 700550 / JCM 31522 / CIP 106686 / LMG 19005 / NCIMB 14063 / MR-1</strain>
    </source>
</reference>
<name>DUT_SHEON</name>
<comment type="function">
    <text evidence="1">This enzyme is involved in nucleotide metabolism: it produces dUMP, the immediate precursor of thymidine nucleotides and it decreases the intracellular concentration of dUTP so that uracil cannot be incorporated into DNA.</text>
</comment>
<comment type="catalytic activity">
    <reaction evidence="1">
        <text>dUTP + H2O = dUMP + diphosphate + H(+)</text>
        <dbReference type="Rhea" id="RHEA:10248"/>
        <dbReference type="ChEBI" id="CHEBI:15377"/>
        <dbReference type="ChEBI" id="CHEBI:15378"/>
        <dbReference type="ChEBI" id="CHEBI:33019"/>
        <dbReference type="ChEBI" id="CHEBI:61555"/>
        <dbReference type="ChEBI" id="CHEBI:246422"/>
        <dbReference type="EC" id="3.6.1.23"/>
    </reaction>
</comment>
<comment type="cofactor">
    <cofactor evidence="1">
        <name>Mg(2+)</name>
        <dbReference type="ChEBI" id="CHEBI:18420"/>
    </cofactor>
</comment>
<comment type="pathway">
    <text evidence="1">Pyrimidine metabolism; dUMP biosynthesis; dUMP from dCTP (dUTP route): step 2/2.</text>
</comment>
<comment type="similarity">
    <text evidence="1">Belongs to the dUTPase family.</text>
</comment>
<feature type="chain" id="PRO_0000182907" description="Deoxyuridine 5'-triphosphate nucleotidohydrolase">
    <location>
        <begin position="1"/>
        <end position="152"/>
    </location>
</feature>
<feature type="binding site" evidence="1">
    <location>
        <begin position="71"/>
        <end position="73"/>
    </location>
    <ligand>
        <name>substrate</name>
    </ligand>
</feature>
<feature type="binding site" evidence="1">
    <location>
        <position position="84"/>
    </location>
    <ligand>
        <name>substrate</name>
    </ligand>
</feature>
<feature type="binding site" evidence="1">
    <location>
        <begin position="88"/>
        <end position="90"/>
    </location>
    <ligand>
        <name>substrate</name>
    </ligand>
</feature>
<feature type="binding site" evidence="1">
    <location>
        <position position="98"/>
    </location>
    <ligand>
        <name>substrate</name>
    </ligand>
</feature>